<sequence>MITVNTLQKMKAAGEKIVMLTAYESSFAALMDDAGVDVLLVGDSLGMAVQGRQSTLPVSLRDMCYHTECVARGAKNAMIVSDLPFGAYQQSKEQAFAAAAELMAAGAHMVKLEGGVWMAETTEFLQMRGIPVCAHIGLTPQSVFAFGGYKVQGRGGKAQALLNDAKAHDEAGAAVVLMECVPAELAKKVTETVSCPTIGIGAGADCDGQVLVMHDMLGIFPGKTAKFVKNFMRGQSSIQAAVRAYVAEVKAKTFPAAEHIFAD</sequence>
<keyword id="KW-0963">Cytoplasm</keyword>
<keyword id="KW-0460">Magnesium</keyword>
<keyword id="KW-0479">Metal-binding</keyword>
<keyword id="KW-0566">Pantothenate biosynthesis</keyword>
<keyword id="KW-0808">Transferase</keyword>
<protein>
    <recommendedName>
        <fullName evidence="1">3-methyl-2-oxobutanoate hydroxymethyltransferase</fullName>
        <ecNumber evidence="1">2.1.2.11</ecNumber>
    </recommendedName>
    <alternativeName>
        <fullName evidence="1">Ketopantoate hydroxymethyltransferase</fullName>
        <shortName evidence="1">KPHMT</shortName>
    </alternativeName>
</protein>
<organism>
    <name type="scientific">Neisseria gonorrhoeae (strain NCCP11945)</name>
    <dbReference type="NCBI Taxonomy" id="521006"/>
    <lineage>
        <taxon>Bacteria</taxon>
        <taxon>Pseudomonadati</taxon>
        <taxon>Pseudomonadota</taxon>
        <taxon>Betaproteobacteria</taxon>
        <taxon>Neisseriales</taxon>
        <taxon>Neisseriaceae</taxon>
        <taxon>Neisseria</taxon>
    </lineage>
</organism>
<comment type="function">
    <text evidence="1">Catalyzes the reversible reaction in which hydroxymethyl group from 5,10-methylenetetrahydrofolate is transferred onto alpha-ketoisovalerate to form ketopantoate.</text>
</comment>
<comment type="catalytic activity">
    <reaction evidence="1">
        <text>3-methyl-2-oxobutanoate + (6R)-5,10-methylene-5,6,7,8-tetrahydrofolate + H2O = 2-dehydropantoate + (6S)-5,6,7,8-tetrahydrofolate</text>
        <dbReference type="Rhea" id="RHEA:11824"/>
        <dbReference type="ChEBI" id="CHEBI:11561"/>
        <dbReference type="ChEBI" id="CHEBI:11851"/>
        <dbReference type="ChEBI" id="CHEBI:15377"/>
        <dbReference type="ChEBI" id="CHEBI:15636"/>
        <dbReference type="ChEBI" id="CHEBI:57453"/>
        <dbReference type="EC" id="2.1.2.11"/>
    </reaction>
</comment>
<comment type="cofactor">
    <cofactor evidence="1">
        <name>Mg(2+)</name>
        <dbReference type="ChEBI" id="CHEBI:18420"/>
    </cofactor>
    <text evidence="1">Binds 1 Mg(2+) ion per subunit.</text>
</comment>
<comment type="pathway">
    <text evidence="1">Cofactor biosynthesis; (R)-pantothenate biosynthesis; (R)-pantoate from 3-methyl-2-oxobutanoate: step 1/2.</text>
</comment>
<comment type="subunit">
    <text evidence="1">Homodecamer; pentamer of dimers.</text>
</comment>
<comment type="subcellular location">
    <subcellularLocation>
        <location evidence="1">Cytoplasm</location>
    </subcellularLocation>
</comment>
<comment type="similarity">
    <text evidence="1">Belongs to the PanB family.</text>
</comment>
<dbReference type="EC" id="2.1.2.11" evidence="1"/>
<dbReference type="EMBL" id="CP001050">
    <property type="protein sequence ID" value="ACF29296.1"/>
    <property type="molecule type" value="Genomic_DNA"/>
</dbReference>
<dbReference type="RefSeq" id="WP_003687894.1">
    <property type="nucleotide sequence ID" value="NC_011035.1"/>
</dbReference>
<dbReference type="SMR" id="B4RKE5"/>
<dbReference type="GeneID" id="66752776"/>
<dbReference type="KEGG" id="ngk:NGK_0605"/>
<dbReference type="HOGENOM" id="CLU_036645_1_0_4"/>
<dbReference type="UniPathway" id="UPA00028">
    <property type="reaction ID" value="UER00003"/>
</dbReference>
<dbReference type="Proteomes" id="UP000002564">
    <property type="component" value="Chromosome"/>
</dbReference>
<dbReference type="GO" id="GO:0005737">
    <property type="term" value="C:cytoplasm"/>
    <property type="evidence" value="ECO:0007669"/>
    <property type="project" value="UniProtKB-SubCell"/>
</dbReference>
<dbReference type="GO" id="GO:0003864">
    <property type="term" value="F:3-methyl-2-oxobutanoate hydroxymethyltransferase activity"/>
    <property type="evidence" value="ECO:0007669"/>
    <property type="project" value="UniProtKB-UniRule"/>
</dbReference>
<dbReference type="GO" id="GO:0000287">
    <property type="term" value="F:magnesium ion binding"/>
    <property type="evidence" value="ECO:0007669"/>
    <property type="project" value="TreeGrafter"/>
</dbReference>
<dbReference type="GO" id="GO:0015940">
    <property type="term" value="P:pantothenate biosynthetic process"/>
    <property type="evidence" value="ECO:0007669"/>
    <property type="project" value="UniProtKB-UniRule"/>
</dbReference>
<dbReference type="CDD" id="cd06557">
    <property type="entry name" value="KPHMT-like"/>
    <property type="match status" value="1"/>
</dbReference>
<dbReference type="FunFam" id="3.20.20.60:FF:000037">
    <property type="entry name" value="3-methyl-2-oxobutanoate hydroxymethyltransferase"/>
    <property type="match status" value="1"/>
</dbReference>
<dbReference type="Gene3D" id="3.20.20.60">
    <property type="entry name" value="Phosphoenolpyruvate-binding domains"/>
    <property type="match status" value="1"/>
</dbReference>
<dbReference type="HAMAP" id="MF_00156">
    <property type="entry name" value="PanB"/>
    <property type="match status" value="1"/>
</dbReference>
<dbReference type="InterPro" id="IPR003700">
    <property type="entry name" value="Pantoate_hydroxy_MeTrfase"/>
</dbReference>
<dbReference type="InterPro" id="IPR015813">
    <property type="entry name" value="Pyrv/PenolPyrv_kinase-like_dom"/>
</dbReference>
<dbReference type="InterPro" id="IPR040442">
    <property type="entry name" value="Pyrv_kinase-like_dom_sf"/>
</dbReference>
<dbReference type="NCBIfam" id="TIGR00222">
    <property type="entry name" value="panB"/>
    <property type="match status" value="1"/>
</dbReference>
<dbReference type="NCBIfam" id="NF001452">
    <property type="entry name" value="PRK00311.1"/>
    <property type="match status" value="1"/>
</dbReference>
<dbReference type="PANTHER" id="PTHR20881">
    <property type="entry name" value="3-METHYL-2-OXOBUTANOATE HYDROXYMETHYLTRANSFERASE"/>
    <property type="match status" value="1"/>
</dbReference>
<dbReference type="PANTHER" id="PTHR20881:SF0">
    <property type="entry name" value="3-METHYL-2-OXOBUTANOATE HYDROXYMETHYLTRANSFERASE"/>
    <property type="match status" value="1"/>
</dbReference>
<dbReference type="Pfam" id="PF02548">
    <property type="entry name" value="Pantoate_transf"/>
    <property type="match status" value="1"/>
</dbReference>
<dbReference type="PIRSF" id="PIRSF000388">
    <property type="entry name" value="Pantoate_hydroxy_MeTrfase"/>
    <property type="match status" value="1"/>
</dbReference>
<dbReference type="SUPFAM" id="SSF51621">
    <property type="entry name" value="Phosphoenolpyruvate/pyruvate domain"/>
    <property type="match status" value="1"/>
</dbReference>
<name>PANB_NEIG2</name>
<evidence type="ECO:0000255" key="1">
    <source>
        <dbReference type="HAMAP-Rule" id="MF_00156"/>
    </source>
</evidence>
<accession>B4RKE5</accession>
<reference key="1">
    <citation type="journal article" date="2008" name="J. Bacteriol.">
        <title>Complete genome sequence of Neisseria gonorrhoeae NCCP11945.</title>
        <authorList>
            <person name="Chung G.T."/>
            <person name="Yoo J.S."/>
            <person name="Oh H.B."/>
            <person name="Lee Y.S."/>
            <person name="Cha S.H."/>
            <person name="Kim S.J."/>
            <person name="Yoo C.K."/>
        </authorList>
    </citation>
    <scope>NUCLEOTIDE SEQUENCE [LARGE SCALE GENOMIC DNA]</scope>
    <source>
        <strain>NCCP11945</strain>
    </source>
</reference>
<feature type="chain" id="PRO_1000096987" description="3-methyl-2-oxobutanoate hydroxymethyltransferase">
    <location>
        <begin position="1"/>
        <end position="263"/>
    </location>
</feature>
<feature type="active site" description="Proton acceptor" evidence="1">
    <location>
        <position position="179"/>
    </location>
</feature>
<feature type="binding site" evidence="1">
    <location>
        <begin position="43"/>
        <end position="44"/>
    </location>
    <ligand>
        <name>3-methyl-2-oxobutanoate</name>
        <dbReference type="ChEBI" id="CHEBI:11851"/>
    </ligand>
</feature>
<feature type="binding site" evidence="1">
    <location>
        <position position="43"/>
    </location>
    <ligand>
        <name>Mg(2+)</name>
        <dbReference type="ChEBI" id="CHEBI:18420"/>
    </ligand>
</feature>
<feature type="binding site" evidence="1">
    <location>
        <position position="82"/>
    </location>
    <ligand>
        <name>3-methyl-2-oxobutanoate</name>
        <dbReference type="ChEBI" id="CHEBI:11851"/>
    </ligand>
</feature>
<feature type="binding site" evidence="1">
    <location>
        <position position="82"/>
    </location>
    <ligand>
        <name>Mg(2+)</name>
        <dbReference type="ChEBI" id="CHEBI:18420"/>
    </ligand>
</feature>
<feature type="binding site" evidence="1">
    <location>
        <position position="111"/>
    </location>
    <ligand>
        <name>3-methyl-2-oxobutanoate</name>
        <dbReference type="ChEBI" id="CHEBI:11851"/>
    </ligand>
</feature>
<feature type="binding site" evidence="1">
    <location>
        <position position="113"/>
    </location>
    <ligand>
        <name>Mg(2+)</name>
        <dbReference type="ChEBI" id="CHEBI:18420"/>
    </ligand>
</feature>
<proteinExistence type="inferred from homology"/>
<gene>
    <name evidence="1" type="primary">panB</name>
    <name type="ordered locus">NGK_0605</name>
</gene>